<reference key="1">
    <citation type="journal article" date="2008" name="Peptides">
        <title>Genomic organization and cloning of novel genes encoding toxin-like peptides of three superfamilies from the spider Orinithoctonus huwena.</title>
        <authorList>
            <person name="Jiang L."/>
            <person name="Chen J."/>
            <person name="Peng L."/>
            <person name="Zhang Y."/>
            <person name="Xiong X."/>
            <person name="Liang S."/>
        </authorList>
    </citation>
    <scope>NUCLEOTIDE SEQUENCE [GENOMIC DNA]</scope>
</reference>
<dbReference type="EMBL" id="EU635747">
    <property type="protein sequence ID" value="ACD01239.1"/>
    <property type="molecule type" value="Genomic_DNA"/>
</dbReference>
<dbReference type="SMR" id="B2ZBB9"/>
<dbReference type="ArachnoServer" id="AS000500">
    <property type="toxin name" value="U15-theraphotoxin-Hs1b"/>
</dbReference>
<dbReference type="GO" id="GO:0005576">
    <property type="term" value="C:extracellular region"/>
    <property type="evidence" value="ECO:0007669"/>
    <property type="project" value="UniProtKB-SubCell"/>
</dbReference>
<dbReference type="GO" id="GO:0015459">
    <property type="term" value="F:potassium channel regulator activity"/>
    <property type="evidence" value="ECO:0007669"/>
    <property type="project" value="UniProtKB-KW"/>
</dbReference>
<dbReference type="GO" id="GO:0004867">
    <property type="term" value="F:serine-type endopeptidase inhibitor activity"/>
    <property type="evidence" value="ECO:0007669"/>
    <property type="project" value="UniProtKB-KW"/>
</dbReference>
<dbReference type="GO" id="GO:0090729">
    <property type="term" value="F:toxin activity"/>
    <property type="evidence" value="ECO:0007669"/>
    <property type="project" value="UniProtKB-KW"/>
</dbReference>
<dbReference type="GO" id="GO:0044562">
    <property type="term" value="P:envenomation resulting in negative regulation of voltage-gated potassium channel activity in another organism"/>
    <property type="evidence" value="ECO:0007669"/>
    <property type="project" value="UniProtKB-ARBA"/>
</dbReference>
<dbReference type="CDD" id="cd22598">
    <property type="entry name" value="Kunitz_huwentoxin"/>
    <property type="match status" value="1"/>
</dbReference>
<dbReference type="FunFam" id="4.10.410.10:FF:000020">
    <property type="entry name" value="Collagen, type VI, alpha 3"/>
    <property type="match status" value="1"/>
</dbReference>
<dbReference type="Gene3D" id="4.10.410.10">
    <property type="entry name" value="Pancreatic trypsin inhibitor Kunitz domain"/>
    <property type="match status" value="1"/>
</dbReference>
<dbReference type="InterPro" id="IPR002223">
    <property type="entry name" value="Kunitz_BPTI"/>
</dbReference>
<dbReference type="InterPro" id="IPR036880">
    <property type="entry name" value="Kunitz_BPTI_sf"/>
</dbReference>
<dbReference type="InterPro" id="IPR051388">
    <property type="entry name" value="Serpin_venom_toxin"/>
</dbReference>
<dbReference type="PANTHER" id="PTHR46751">
    <property type="entry name" value="EPPIN"/>
    <property type="match status" value="1"/>
</dbReference>
<dbReference type="PANTHER" id="PTHR46751:SF1">
    <property type="entry name" value="WAP FOUR-DISULFIDE CORE DOMAIN PROTEIN 6A"/>
    <property type="match status" value="1"/>
</dbReference>
<dbReference type="Pfam" id="PF00014">
    <property type="entry name" value="Kunitz_BPTI"/>
    <property type="match status" value="1"/>
</dbReference>
<dbReference type="PRINTS" id="PR00759">
    <property type="entry name" value="BASICPTASE"/>
</dbReference>
<dbReference type="SMART" id="SM00131">
    <property type="entry name" value="KU"/>
    <property type="match status" value="1"/>
</dbReference>
<dbReference type="SUPFAM" id="SSF57362">
    <property type="entry name" value="BPTI-like"/>
    <property type="match status" value="1"/>
</dbReference>
<dbReference type="PROSITE" id="PS50279">
    <property type="entry name" value="BPTI_KUNITZ_2"/>
    <property type="match status" value="1"/>
</dbReference>
<organism>
    <name type="scientific">Cyriopagopus schmidti</name>
    <name type="common">Chinese bird spider</name>
    <name type="synonym">Haplopelma schmidti</name>
    <dbReference type="NCBI Taxonomy" id="29017"/>
    <lineage>
        <taxon>Eukaryota</taxon>
        <taxon>Metazoa</taxon>
        <taxon>Ecdysozoa</taxon>
        <taxon>Arthropoda</taxon>
        <taxon>Chelicerata</taxon>
        <taxon>Arachnida</taxon>
        <taxon>Araneae</taxon>
        <taxon>Mygalomorphae</taxon>
        <taxon>Theraphosidae</taxon>
        <taxon>Cyriopagopus</taxon>
    </lineage>
</organism>
<protein>
    <recommendedName>
        <fullName>Kunitz-type U15-theraphotoxin-Hs1b</fullName>
        <shortName>U15-TRTX-Hs1b</shortName>
    </recommendedName>
    <alternativeName>
        <fullName>Kunitz-type serine protease inhibitor huwentoxin-11g6</fullName>
        <shortName>HW11g6</shortName>
    </alternativeName>
</protein>
<comment type="function">
    <text evidence="2">Serine protease inhibitor that inhibits trypsin at a molar ratio of 1:1.</text>
</comment>
<comment type="subcellular location">
    <subcellularLocation>
        <location evidence="6">Secreted</location>
    </subcellularLocation>
</comment>
<comment type="tissue specificity">
    <text evidence="6">Expressed by the venom gland.</text>
</comment>
<comment type="similarity">
    <text evidence="5">Belongs to the venom Kunitz-type family. 03 (sub-Kunitz) subfamily.</text>
</comment>
<name>VKTG6_CYRSC</name>
<sequence length="88" mass="9855">MGTARFLSAVLLLSVLLMVTFPALLSAEYHDGRVDICSLPYDSGDCLRFFEMWYFDGTTCTKFVYGGYGGNDNRFPTEKACMKRCAKA</sequence>
<accession>B2ZBB9</accession>
<proteinExistence type="inferred from homology"/>
<keyword id="KW-1015">Disulfide bond</keyword>
<keyword id="KW-0646">Protease inhibitor</keyword>
<keyword id="KW-0964">Secreted</keyword>
<keyword id="KW-0722">Serine protease inhibitor</keyword>
<keyword id="KW-0732">Signal</keyword>
<evidence type="ECO:0000250" key="1"/>
<evidence type="ECO:0000250" key="2">
    <source>
        <dbReference type="UniProtKB" id="P68425"/>
    </source>
</evidence>
<evidence type="ECO:0000255" key="3"/>
<evidence type="ECO:0000255" key="4">
    <source>
        <dbReference type="PROSITE-ProRule" id="PRU00031"/>
    </source>
</evidence>
<evidence type="ECO:0000305" key="5"/>
<evidence type="ECO:0000305" key="6">
    <source>
    </source>
</evidence>
<feature type="signal peptide" evidence="3">
    <location>
        <begin position="1"/>
        <end position="27"/>
    </location>
</feature>
<feature type="propeptide" id="PRO_0000380156" evidence="1">
    <location>
        <begin position="28"/>
        <end position="33"/>
    </location>
</feature>
<feature type="chain" id="PRO_0000380157" description="Kunitz-type U15-theraphotoxin-Hs1b">
    <location>
        <begin position="34"/>
        <end position="88"/>
    </location>
</feature>
<feature type="domain" description="BPTI/Kunitz inhibitor" evidence="4">
    <location>
        <begin position="37"/>
        <end position="85"/>
    </location>
</feature>
<feature type="site" description="Reactive bond for chymotrypsin" evidence="1">
    <location>
        <begin position="47"/>
        <end position="48"/>
    </location>
</feature>
<feature type="disulfide bond" evidence="4">
    <location>
        <begin position="37"/>
        <end position="85"/>
    </location>
</feature>
<feature type="disulfide bond" evidence="4">
    <location>
        <begin position="60"/>
        <end position="81"/>
    </location>
</feature>